<evidence type="ECO:0000255" key="1">
    <source>
        <dbReference type="HAMAP-Rule" id="MF_01953"/>
    </source>
</evidence>
<accession>A3DGF8</accession>
<protein>
    <recommendedName>
        <fullName evidence="1">Urease subunit alpha</fullName>
        <ecNumber evidence="1">3.5.1.5</ecNumber>
    </recommendedName>
    <alternativeName>
        <fullName evidence="1">Urea amidohydrolase subunit alpha</fullName>
    </alternativeName>
</protein>
<reference key="1">
    <citation type="submission" date="2007-02" db="EMBL/GenBank/DDBJ databases">
        <title>Complete sequence of Clostridium thermocellum ATCC 27405.</title>
        <authorList>
            <consortium name="US DOE Joint Genome Institute"/>
            <person name="Copeland A."/>
            <person name="Lucas S."/>
            <person name="Lapidus A."/>
            <person name="Barry K."/>
            <person name="Detter J.C."/>
            <person name="Glavina del Rio T."/>
            <person name="Hammon N."/>
            <person name="Israni S."/>
            <person name="Dalin E."/>
            <person name="Tice H."/>
            <person name="Pitluck S."/>
            <person name="Chertkov O."/>
            <person name="Brettin T."/>
            <person name="Bruce D."/>
            <person name="Han C."/>
            <person name="Tapia R."/>
            <person name="Gilna P."/>
            <person name="Schmutz J."/>
            <person name="Larimer F."/>
            <person name="Land M."/>
            <person name="Hauser L."/>
            <person name="Kyrpides N."/>
            <person name="Mikhailova N."/>
            <person name="Wu J.H.D."/>
            <person name="Newcomb M."/>
            <person name="Richardson P."/>
        </authorList>
    </citation>
    <scope>NUCLEOTIDE SEQUENCE [LARGE SCALE GENOMIC DNA]</scope>
    <source>
        <strain>ATCC 27405 / DSM 1237 / JCM 9322 / NBRC 103400 / NCIMB 10682 / NRRL B-4536 / VPI 7372</strain>
    </source>
</reference>
<proteinExistence type="inferred from homology"/>
<keyword id="KW-0963">Cytoplasm</keyword>
<keyword id="KW-0378">Hydrolase</keyword>
<keyword id="KW-0479">Metal-binding</keyword>
<keyword id="KW-0533">Nickel</keyword>
<keyword id="KW-1185">Reference proteome</keyword>
<dbReference type="EC" id="3.5.1.5" evidence="1"/>
<dbReference type="EMBL" id="CP000568">
    <property type="protein sequence ID" value="ABN53037.1"/>
    <property type="molecule type" value="Genomic_DNA"/>
</dbReference>
<dbReference type="RefSeq" id="WP_011838265.1">
    <property type="nucleotide sequence ID" value="NC_009012.1"/>
</dbReference>
<dbReference type="SMR" id="A3DGF8"/>
<dbReference type="STRING" id="203119.Cthe_1816"/>
<dbReference type="GeneID" id="35804258"/>
<dbReference type="KEGG" id="cth:Cthe_1816"/>
<dbReference type="eggNOG" id="COG0804">
    <property type="taxonomic scope" value="Bacteria"/>
</dbReference>
<dbReference type="HOGENOM" id="CLU_000980_0_0_9"/>
<dbReference type="OrthoDB" id="9802793at2"/>
<dbReference type="UniPathway" id="UPA00258">
    <property type="reaction ID" value="UER00370"/>
</dbReference>
<dbReference type="Proteomes" id="UP000002145">
    <property type="component" value="Chromosome"/>
</dbReference>
<dbReference type="GO" id="GO:0005737">
    <property type="term" value="C:cytoplasm"/>
    <property type="evidence" value="ECO:0007669"/>
    <property type="project" value="UniProtKB-SubCell"/>
</dbReference>
<dbReference type="GO" id="GO:0016151">
    <property type="term" value="F:nickel cation binding"/>
    <property type="evidence" value="ECO:0007669"/>
    <property type="project" value="UniProtKB-UniRule"/>
</dbReference>
<dbReference type="GO" id="GO:0009039">
    <property type="term" value="F:urease activity"/>
    <property type="evidence" value="ECO:0007669"/>
    <property type="project" value="UniProtKB-UniRule"/>
</dbReference>
<dbReference type="GO" id="GO:0043419">
    <property type="term" value="P:urea catabolic process"/>
    <property type="evidence" value="ECO:0007669"/>
    <property type="project" value="UniProtKB-UniRule"/>
</dbReference>
<dbReference type="CDD" id="cd00375">
    <property type="entry name" value="Urease_alpha"/>
    <property type="match status" value="1"/>
</dbReference>
<dbReference type="Gene3D" id="3.20.20.140">
    <property type="entry name" value="Metal-dependent hydrolases"/>
    <property type="match status" value="1"/>
</dbReference>
<dbReference type="Gene3D" id="2.30.40.10">
    <property type="entry name" value="Urease, subunit C, domain 1"/>
    <property type="match status" value="1"/>
</dbReference>
<dbReference type="HAMAP" id="MF_01953">
    <property type="entry name" value="Urease_alpha"/>
    <property type="match status" value="1"/>
</dbReference>
<dbReference type="InterPro" id="IPR006680">
    <property type="entry name" value="Amidohydro-rel"/>
</dbReference>
<dbReference type="InterPro" id="IPR011059">
    <property type="entry name" value="Metal-dep_hydrolase_composite"/>
</dbReference>
<dbReference type="InterPro" id="IPR032466">
    <property type="entry name" value="Metal_Hydrolase"/>
</dbReference>
<dbReference type="InterPro" id="IPR011612">
    <property type="entry name" value="Urease_alpha_N_dom"/>
</dbReference>
<dbReference type="InterPro" id="IPR050112">
    <property type="entry name" value="Urease_alpha_subunit"/>
</dbReference>
<dbReference type="InterPro" id="IPR017950">
    <property type="entry name" value="Urease_AS"/>
</dbReference>
<dbReference type="InterPro" id="IPR005848">
    <property type="entry name" value="Urease_asu"/>
</dbReference>
<dbReference type="InterPro" id="IPR017951">
    <property type="entry name" value="Urease_asu_c"/>
</dbReference>
<dbReference type="NCBIfam" id="NF009685">
    <property type="entry name" value="PRK13206.1"/>
    <property type="match status" value="1"/>
</dbReference>
<dbReference type="NCBIfam" id="NF009686">
    <property type="entry name" value="PRK13207.1"/>
    <property type="match status" value="1"/>
</dbReference>
<dbReference type="NCBIfam" id="TIGR01792">
    <property type="entry name" value="urease_alph"/>
    <property type="match status" value="1"/>
</dbReference>
<dbReference type="PANTHER" id="PTHR43440">
    <property type="entry name" value="UREASE"/>
    <property type="match status" value="1"/>
</dbReference>
<dbReference type="PANTHER" id="PTHR43440:SF1">
    <property type="entry name" value="UREASE"/>
    <property type="match status" value="1"/>
</dbReference>
<dbReference type="Pfam" id="PF01979">
    <property type="entry name" value="Amidohydro_1"/>
    <property type="match status" value="1"/>
</dbReference>
<dbReference type="Pfam" id="PF00449">
    <property type="entry name" value="Urease_alpha"/>
    <property type="match status" value="1"/>
</dbReference>
<dbReference type="PRINTS" id="PR01752">
    <property type="entry name" value="UREASE"/>
</dbReference>
<dbReference type="SUPFAM" id="SSF51338">
    <property type="entry name" value="Composite domain of metallo-dependent hydrolases"/>
    <property type="match status" value="2"/>
</dbReference>
<dbReference type="SUPFAM" id="SSF51556">
    <property type="entry name" value="Metallo-dependent hydrolases"/>
    <property type="match status" value="1"/>
</dbReference>
<dbReference type="PROSITE" id="PS00145">
    <property type="entry name" value="UREASE_2"/>
    <property type="match status" value="1"/>
</dbReference>
<dbReference type="PROSITE" id="PS51368">
    <property type="entry name" value="UREASE_3"/>
    <property type="match status" value="1"/>
</dbReference>
<comment type="catalytic activity">
    <reaction evidence="1">
        <text>urea + 2 H2O + H(+) = hydrogencarbonate + 2 NH4(+)</text>
        <dbReference type="Rhea" id="RHEA:20557"/>
        <dbReference type="ChEBI" id="CHEBI:15377"/>
        <dbReference type="ChEBI" id="CHEBI:15378"/>
        <dbReference type="ChEBI" id="CHEBI:16199"/>
        <dbReference type="ChEBI" id="CHEBI:17544"/>
        <dbReference type="ChEBI" id="CHEBI:28938"/>
        <dbReference type="EC" id="3.5.1.5"/>
    </reaction>
</comment>
<comment type="cofactor">
    <cofactor evidence="1">
        <name>Ni cation</name>
        <dbReference type="ChEBI" id="CHEBI:25516"/>
    </cofactor>
    <text evidence="1">Binds 2 nickel ions per subunit.</text>
</comment>
<comment type="pathway">
    <text evidence="1">Nitrogen metabolism; urea degradation; CO(2) and NH(3) from urea (urease route): step 1/1.</text>
</comment>
<comment type="subunit">
    <text evidence="1">Heterotrimer of UreA (gamma), UreB (beta) and UreC (alpha) subunits. Three heterotrimers associate to form the active enzyme.</text>
</comment>
<comment type="subcellular location">
    <subcellularLocation>
        <location evidence="1">Cytoplasm</location>
    </subcellularLocation>
</comment>
<comment type="PTM">
    <text evidence="1">Carboxylation allows a single lysine to coordinate two nickel ions.</text>
</comment>
<comment type="similarity">
    <text evidence="1">Belongs to the metallo-dependent hydrolases superfamily. Urease alpha subunit family.</text>
</comment>
<feature type="chain" id="PRO_1000088489" description="Urease subunit alpha">
    <location>
        <begin position="1"/>
        <end position="572"/>
    </location>
</feature>
<feature type="active site" description="Proton donor" evidence="1">
    <location>
        <position position="325"/>
    </location>
</feature>
<feature type="binding site" evidence="1">
    <location>
        <position position="139"/>
    </location>
    <ligand>
        <name>Ni(2+)</name>
        <dbReference type="ChEBI" id="CHEBI:49786"/>
        <label>1</label>
    </ligand>
</feature>
<feature type="binding site" evidence="1">
    <location>
        <position position="141"/>
    </location>
    <ligand>
        <name>Ni(2+)</name>
        <dbReference type="ChEBI" id="CHEBI:49786"/>
        <label>1</label>
    </ligand>
</feature>
<feature type="binding site" description="via carbamate group" evidence="1">
    <location>
        <position position="222"/>
    </location>
    <ligand>
        <name>Ni(2+)</name>
        <dbReference type="ChEBI" id="CHEBI:49786"/>
        <label>1</label>
    </ligand>
</feature>
<feature type="binding site" description="via carbamate group" evidence="1">
    <location>
        <position position="222"/>
    </location>
    <ligand>
        <name>Ni(2+)</name>
        <dbReference type="ChEBI" id="CHEBI:49786"/>
        <label>2</label>
    </ligand>
</feature>
<feature type="binding site" evidence="1">
    <location>
        <position position="224"/>
    </location>
    <ligand>
        <name>substrate</name>
    </ligand>
</feature>
<feature type="binding site" evidence="1">
    <location>
        <position position="251"/>
    </location>
    <ligand>
        <name>Ni(2+)</name>
        <dbReference type="ChEBI" id="CHEBI:49786"/>
        <label>2</label>
    </ligand>
</feature>
<feature type="binding site" evidence="1">
    <location>
        <position position="277"/>
    </location>
    <ligand>
        <name>Ni(2+)</name>
        <dbReference type="ChEBI" id="CHEBI:49786"/>
        <label>2</label>
    </ligand>
</feature>
<feature type="binding site" evidence="1">
    <location>
        <position position="365"/>
    </location>
    <ligand>
        <name>Ni(2+)</name>
        <dbReference type="ChEBI" id="CHEBI:49786"/>
        <label>1</label>
    </ligand>
</feature>
<feature type="modified residue" description="N6-carboxylysine" evidence="1">
    <location>
        <position position="222"/>
    </location>
</feature>
<organism>
    <name type="scientific">Acetivibrio thermocellus (strain ATCC 27405 / DSM 1237 / JCM 9322 / NBRC 103400 / NCIMB 10682 / NRRL B-4536 / VPI 7372)</name>
    <name type="common">Clostridium thermocellum</name>
    <dbReference type="NCBI Taxonomy" id="203119"/>
    <lineage>
        <taxon>Bacteria</taxon>
        <taxon>Bacillati</taxon>
        <taxon>Bacillota</taxon>
        <taxon>Clostridia</taxon>
        <taxon>Eubacteriales</taxon>
        <taxon>Oscillospiraceae</taxon>
        <taxon>Acetivibrio</taxon>
    </lineage>
</organism>
<gene>
    <name evidence="1" type="primary">ureC</name>
    <name type="ordered locus">Cthe_1816</name>
</gene>
<sequence>MSVKISGKDYAGMYGPTKGDRVRLADTDLIIEIEEDYTVYGDECKFGGGKSIRDGMGQSPSAARDDKVLDLVITNAIIFDTWGIVKGDIGIKDGKIAGIGKAGNPKVMSGVSEDLIIGASTEVITGEGLIVTPGGIDTHIHFICPQQIETALFSGITTMIGGGTGPADGTNATTCTPGAFNIRKMLEAAEDFPVNLGFLGKGNASFETPLIEQIEAGAIGLKLHEDWGTTPKAIDTCLKVADLFDVQVAIHTDTLNEAGFVENTIAAIAGRTIHTYHTEGAGGGHAPDIIKIASRMNVLPSSTNPTMPFTVNTLDEHLDMLMVCHHLDSKVKEDVAFADSRIRPETIAAEDILHDMGVFSMMSSDSQAMGRVGEVIIRTWQTAHKMKLQRGALPGEKSGCDNIRAKRYLAKYTINPAITHGISQYVGSLEKGKIADLVLWKPAMFGVKPEMIIKGGFIIAGRMGDANASIPTPQPVIYKNMFGAFGKAKYGTCVTFVSKASLENGVVEKMGLQRKVLPVQGCRNISKKYMVHNNATPEIEVDPETYEVKVDGEIITCEPLKVLPMAQRYFLF</sequence>
<name>URE1_ACET2</name>